<accession>Q3UHH2</accession>
<accession>Q7TPT5</accession>
<comment type="subcellular location">
    <subcellularLocation>
        <location evidence="4">Membrane</location>
        <topology evidence="4">Multi-pass membrane protein</topology>
    </subcellularLocation>
</comment>
<comment type="alternative products">
    <event type="alternative splicing"/>
    <isoform>
        <id>Q3UHH2-1</id>
        <name>1</name>
        <sequence type="displayed"/>
    </isoform>
    <isoform>
        <id>Q3UHH2-2</id>
        <name>2</name>
        <sequence type="described" ref="VSP_028957 VSP_028958"/>
    </isoform>
</comment>
<comment type="similarity">
    <text evidence="4">Belongs to the major facilitator (TC 2.A.1) superfamily. Organic cation transporter (TC 2.A.1.19) family.</text>
</comment>
<proteinExistence type="evidence at transcript level"/>
<gene>
    <name type="primary">Slc22a23</name>
</gene>
<feature type="chain" id="PRO_0000308316" description="Solute carrier family 22 member 23">
    <location>
        <begin position="1"/>
        <end position="689"/>
    </location>
</feature>
<feature type="transmembrane region" description="Helical" evidence="1">
    <location>
        <begin position="229"/>
        <end position="249"/>
    </location>
</feature>
<feature type="transmembrane region" description="Helical" evidence="1">
    <location>
        <begin position="253"/>
        <end position="273"/>
    </location>
</feature>
<feature type="transmembrane region" description="Helical" evidence="1">
    <location>
        <begin position="283"/>
        <end position="303"/>
    </location>
</feature>
<feature type="transmembrane region" description="Helical" evidence="1">
    <location>
        <begin position="310"/>
        <end position="330"/>
    </location>
</feature>
<feature type="transmembrane region" description="Helical" evidence="1">
    <location>
        <begin position="339"/>
        <end position="359"/>
    </location>
</feature>
<feature type="transmembrane region" description="Helical" evidence="1">
    <location>
        <begin position="466"/>
        <end position="486"/>
    </location>
</feature>
<feature type="transmembrane region" description="Helical" evidence="1">
    <location>
        <begin position="489"/>
        <end position="509"/>
    </location>
</feature>
<feature type="transmembrane region" description="Helical" evidence="1">
    <location>
        <begin position="541"/>
        <end position="561"/>
    </location>
</feature>
<feature type="transmembrane region" description="Helical" evidence="1">
    <location>
        <begin position="572"/>
        <end position="592"/>
    </location>
</feature>
<feature type="transmembrane region" description="Helical" evidence="1">
    <location>
        <begin position="601"/>
        <end position="621"/>
    </location>
</feature>
<feature type="region of interest" description="Disordered" evidence="2">
    <location>
        <begin position="1"/>
        <end position="55"/>
    </location>
</feature>
<feature type="region of interest" description="Disordered" evidence="2">
    <location>
        <begin position="162"/>
        <end position="188"/>
    </location>
</feature>
<feature type="compositionally biased region" description="Polar residues" evidence="2">
    <location>
        <begin position="165"/>
        <end position="177"/>
    </location>
</feature>
<feature type="glycosylation site" description="N-linked (GlcNAc...) asparagine" evidence="1">
    <location>
        <position position="24"/>
    </location>
</feature>
<feature type="glycosylation site" description="N-linked (GlcNAc...) asparagine" evidence="1">
    <location>
        <position position="274"/>
    </location>
</feature>
<feature type="splice variant" id="VSP_028957" description="In isoform 2." evidence="3">
    <location>
        <begin position="1"/>
        <end position="276"/>
    </location>
</feature>
<feature type="splice variant" id="VSP_028958" description="In isoform 2." evidence="3">
    <location>
        <begin position="522"/>
        <end position="529"/>
    </location>
</feature>
<feature type="sequence conflict" description="In Ref. 2; AAH53705." evidence="4" ref="2">
    <original>Q</original>
    <variation>R</variation>
    <location>
        <position position="370"/>
    </location>
</feature>
<feature type="sequence conflict" description="In Ref. 2; AAH53705." evidence="4" ref="2">
    <original>A</original>
    <variation>V</variation>
    <location>
        <position position="501"/>
    </location>
</feature>
<keyword id="KW-0025">Alternative splicing</keyword>
<keyword id="KW-0325">Glycoprotein</keyword>
<keyword id="KW-0406">Ion transport</keyword>
<keyword id="KW-0472">Membrane</keyword>
<keyword id="KW-1185">Reference proteome</keyword>
<keyword id="KW-0812">Transmembrane</keyword>
<keyword id="KW-1133">Transmembrane helix</keyword>
<keyword id="KW-0813">Transport</keyword>
<name>S22AN_MOUSE</name>
<protein>
    <recommendedName>
        <fullName>Solute carrier family 22 member 23</fullName>
    </recommendedName>
</protein>
<reference key="1">
    <citation type="journal article" date="2005" name="Science">
        <title>The transcriptional landscape of the mammalian genome.</title>
        <authorList>
            <person name="Carninci P."/>
            <person name="Kasukawa T."/>
            <person name="Katayama S."/>
            <person name="Gough J."/>
            <person name="Frith M.C."/>
            <person name="Maeda N."/>
            <person name="Oyama R."/>
            <person name="Ravasi T."/>
            <person name="Lenhard B."/>
            <person name="Wells C."/>
            <person name="Kodzius R."/>
            <person name="Shimokawa K."/>
            <person name="Bajic V.B."/>
            <person name="Brenner S.E."/>
            <person name="Batalov S."/>
            <person name="Forrest A.R."/>
            <person name="Zavolan M."/>
            <person name="Davis M.J."/>
            <person name="Wilming L.G."/>
            <person name="Aidinis V."/>
            <person name="Allen J.E."/>
            <person name="Ambesi-Impiombato A."/>
            <person name="Apweiler R."/>
            <person name="Aturaliya R.N."/>
            <person name="Bailey T.L."/>
            <person name="Bansal M."/>
            <person name="Baxter L."/>
            <person name="Beisel K.W."/>
            <person name="Bersano T."/>
            <person name="Bono H."/>
            <person name="Chalk A.M."/>
            <person name="Chiu K.P."/>
            <person name="Choudhary V."/>
            <person name="Christoffels A."/>
            <person name="Clutterbuck D.R."/>
            <person name="Crowe M.L."/>
            <person name="Dalla E."/>
            <person name="Dalrymple B.P."/>
            <person name="de Bono B."/>
            <person name="Della Gatta G."/>
            <person name="di Bernardo D."/>
            <person name="Down T."/>
            <person name="Engstrom P."/>
            <person name="Fagiolini M."/>
            <person name="Faulkner G."/>
            <person name="Fletcher C.F."/>
            <person name="Fukushima T."/>
            <person name="Furuno M."/>
            <person name="Futaki S."/>
            <person name="Gariboldi M."/>
            <person name="Georgii-Hemming P."/>
            <person name="Gingeras T.R."/>
            <person name="Gojobori T."/>
            <person name="Green R.E."/>
            <person name="Gustincich S."/>
            <person name="Harbers M."/>
            <person name="Hayashi Y."/>
            <person name="Hensch T.K."/>
            <person name="Hirokawa N."/>
            <person name="Hill D."/>
            <person name="Huminiecki L."/>
            <person name="Iacono M."/>
            <person name="Ikeo K."/>
            <person name="Iwama A."/>
            <person name="Ishikawa T."/>
            <person name="Jakt M."/>
            <person name="Kanapin A."/>
            <person name="Katoh M."/>
            <person name="Kawasawa Y."/>
            <person name="Kelso J."/>
            <person name="Kitamura H."/>
            <person name="Kitano H."/>
            <person name="Kollias G."/>
            <person name="Krishnan S.P."/>
            <person name="Kruger A."/>
            <person name="Kummerfeld S.K."/>
            <person name="Kurochkin I.V."/>
            <person name="Lareau L.F."/>
            <person name="Lazarevic D."/>
            <person name="Lipovich L."/>
            <person name="Liu J."/>
            <person name="Liuni S."/>
            <person name="McWilliam S."/>
            <person name="Madan Babu M."/>
            <person name="Madera M."/>
            <person name="Marchionni L."/>
            <person name="Matsuda H."/>
            <person name="Matsuzawa S."/>
            <person name="Miki H."/>
            <person name="Mignone F."/>
            <person name="Miyake S."/>
            <person name="Morris K."/>
            <person name="Mottagui-Tabar S."/>
            <person name="Mulder N."/>
            <person name="Nakano N."/>
            <person name="Nakauchi H."/>
            <person name="Ng P."/>
            <person name="Nilsson R."/>
            <person name="Nishiguchi S."/>
            <person name="Nishikawa S."/>
            <person name="Nori F."/>
            <person name="Ohara O."/>
            <person name="Okazaki Y."/>
            <person name="Orlando V."/>
            <person name="Pang K.C."/>
            <person name="Pavan W.J."/>
            <person name="Pavesi G."/>
            <person name="Pesole G."/>
            <person name="Petrovsky N."/>
            <person name="Piazza S."/>
            <person name="Reed J."/>
            <person name="Reid J.F."/>
            <person name="Ring B.Z."/>
            <person name="Ringwald M."/>
            <person name="Rost B."/>
            <person name="Ruan Y."/>
            <person name="Salzberg S.L."/>
            <person name="Sandelin A."/>
            <person name="Schneider C."/>
            <person name="Schoenbach C."/>
            <person name="Sekiguchi K."/>
            <person name="Semple C.A."/>
            <person name="Seno S."/>
            <person name="Sessa L."/>
            <person name="Sheng Y."/>
            <person name="Shibata Y."/>
            <person name="Shimada H."/>
            <person name="Shimada K."/>
            <person name="Silva D."/>
            <person name="Sinclair B."/>
            <person name="Sperling S."/>
            <person name="Stupka E."/>
            <person name="Sugiura K."/>
            <person name="Sultana R."/>
            <person name="Takenaka Y."/>
            <person name="Taki K."/>
            <person name="Tammoja K."/>
            <person name="Tan S.L."/>
            <person name="Tang S."/>
            <person name="Taylor M.S."/>
            <person name="Tegner J."/>
            <person name="Teichmann S.A."/>
            <person name="Ueda H.R."/>
            <person name="van Nimwegen E."/>
            <person name="Verardo R."/>
            <person name="Wei C.L."/>
            <person name="Yagi K."/>
            <person name="Yamanishi H."/>
            <person name="Zabarovsky E."/>
            <person name="Zhu S."/>
            <person name="Zimmer A."/>
            <person name="Hide W."/>
            <person name="Bult C."/>
            <person name="Grimmond S.M."/>
            <person name="Teasdale R.D."/>
            <person name="Liu E.T."/>
            <person name="Brusic V."/>
            <person name="Quackenbush J."/>
            <person name="Wahlestedt C."/>
            <person name="Mattick J.S."/>
            <person name="Hume D.A."/>
            <person name="Kai C."/>
            <person name="Sasaki D."/>
            <person name="Tomaru Y."/>
            <person name="Fukuda S."/>
            <person name="Kanamori-Katayama M."/>
            <person name="Suzuki M."/>
            <person name="Aoki J."/>
            <person name="Arakawa T."/>
            <person name="Iida J."/>
            <person name="Imamura K."/>
            <person name="Itoh M."/>
            <person name="Kato T."/>
            <person name="Kawaji H."/>
            <person name="Kawagashira N."/>
            <person name="Kawashima T."/>
            <person name="Kojima M."/>
            <person name="Kondo S."/>
            <person name="Konno H."/>
            <person name="Nakano K."/>
            <person name="Ninomiya N."/>
            <person name="Nishio T."/>
            <person name="Okada M."/>
            <person name="Plessy C."/>
            <person name="Shibata K."/>
            <person name="Shiraki T."/>
            <person name="Suzuki S."/>
            <person name="Tagami M."/>
            <person name="Waki K."/>
            <person name="Watahiki A."/>
            <person name="Okamura-Oho Y."/>
            <person name="Suzuki H."/>
            <person name="Kawai J."/>
            <person name="Hayashizaki Y."/>
        </authorList>
    </citation>
    <scope>NUCLEOTIDE SEQUENCE [LARGE SCALE MRNA] (ISOFORM 1)</scope>
    <source>
        <strain>C57BL/6J</strain>
        <tissue>Brain</tissue>
    </source>
</reference>
<reference key="2">
    <citation type="journal article" date="2004" name="Genome Res.">
        <title>The status, quality, and expansion of the NIH full-length cDNA project: the Mammalian Gene Collection (MGC).</title>
        <authorList>
            <consortium name="The MGC Project Team"/>
        </authorList>
    </citation>
    <scope>NUCLEOTIDE SEQUENCE [LARGE SCALE MRNA] (ISOFORM 2)</scope>
    <source>
        <strain>C3H/He</strain>
        <tissue>Osteoblast</tissue>
    </source>
</reference>
<reference key="3">
    <citation type="journal article" date="2007" name="Genomics">
        <title>Identification of six putative human transporters with structural similarity to the drug transporter SLC22 family.</title>
        <authorList>
            <person name="Jacobsson J.A."/>
            <person name="Haitina T."/>
            <person name="Lindblom J."/>
            <person name="Fredriksson R."/>
        </authorList>
    </citation>
    <scope>IDENTIFICATION</scope>
</reference>
<sequence>MAIDRRREAAGSGAGRQPAPAEENGSLPPGDAAASAPLGGRAGSGSSAEIQPLPALHPSGGPHSSCCAATAAPSLLLLDYDGSVLPFLGGLGGGYQKTLVVLTWIPALFIGFSQFSDSFLLDQPDFWCRGAGKGTELAGATVTGRWGDMGNWTSPSATPFSTASWGTTSNRSNSSDTPPLPSPPGKGNNDSNCDCHAWDYGIRTGLIQNVVSKWDLVCDNTWKVHIAKFSLLVGLIFGYLITGCIADWVGRRPVLLFSTIFILIFGLTVALSVNVTMFSTLRFFEGFCLAGIILTLYALRIELCPPGKRFIITMVASFVAMAGQFLMPGLAALCRDWQVLQALIICPFLLMLLYWSIFPESLRWLMATQQFESAKKLILYLTQKNCVSPESDIKGVMPELEKELSRRPKKVCIVKVVGTRNLWKNIVVLCVNSLTGYGIHHCFARSMMGHEVKVPLLENFYADYYTMASIALASCLAMCLVVKFLGRRGGLLLFMILTALASLLQLGLLNLIGKYSQHPDSELQLKLAVGMSDSVKDKFSIAFSIVGMFASHAVGSLSVFFCAEITPTVIRCGGLGLVLASAGFGMLTAPIIELHNQKGYFLHHIIFACCTLICIICILLLPESRNQNLPENIANGEHYTRQPLLPHKKGEQPLLLTNAELKDYSGLHDVAAVGDGLPEGATANGMKTM</sequence>
<dbReference type="EMBL" id="AK147397">
    <property type="protein sequence ID" value="BAE27885.1"/>
    <property type="molecule type" value="mRNA"/>
</dbReference>
<dbReference type="EMBL" id="BC053705">
    <property type="protein sequence ID" value="AAH53705.1"/>
    <property type="molecule type" value="mRNA"/>
</dbReference>
<dbReference type="CCDS" id="CCDS26446.1">
    <molecule id="Q3UHH2-1"/>
</dbReference>
<dbReference type="RefSeq" id="NP_001028339.1">
    <molecule id="Q3UHH2-1"/>
    <property type="nucleotide sequence ID" value="NM_001033167.3"/>
</dbReference>
<dbReference type="SMR" id="Q3UHH2"/>
<dbReference type="FunCoup" id="Q3UHH2">
    <property type="interactions" value="82"/>
</dbReference>
<dbReference type="STRING" id="10090.ENSMUSP00000042742"/>
<dbReference type="GlyCosmos" id="Q3UHH2">
    <property type="glycosylation" value="2 sites, No reported glycans"/>
</dbReference>
<dbReference type="GlyGen" id="Q3UHH2">
    <property type="glycosylation" value="4 sites, 2 N-linked glycans (2 sites)"/>
</dbReference>
<dbReference type="iPTMnet" id="Q3UHH2"/>
<dbReference type="PhosphoSitePlus" id="Q3UHH2"/>
<dbReference type="PaxDb" id="10090-ENSMUSP00000042742"/>
<dbReference type="PeptideAtlas" id="Q3UHH2"/>
<dbReference type="ProteomicsDB" id="253363">
    <molecule id="Q3UHH2-1"/>
</dbReference>
<dbReference type="ProteomicsDB" id="253364">
    <molecule id="Q3UHH2-2"/>
</dbReference>
<dbReference type="Antibodypedia" id="9497">
    <property type="antibodies" value="60 antibodies from 19 providers"/>
</dbReference>
<dbReference type="Ensembl" id="ENSMUST00000040336.12">
    <molecule id="Q3UHH2-1"/>
    <property type="protein sequence ID" value="ENSMUSP00000042742.6"/>
    <property type="gene ID" value="ENSMUSG00000038267.16"/>
</dbReference>
<dbReference type="GeneID" id="73102"/>
<dbReference type="KEGG" id="mmu:73102"/>
<dbReference type="UCSC" id="uc007qbg.1">
    <molecule id="Q3UHH2-2"/>
    <property type="organism name" value="mouse"/>
</dbReference>
<dbReference type="UCSC" id="uc007qbh.1">
    <molecule id="Q3UHH2-1"/>
    <property type="organism name" value="mouse"/>
</dbReference>
<dbReference type="AGR" id="MGI:1920352"/>
<dbReference type="CTD" id="63027"/>
<dbReference type="MGI" id="MGI:1920352">
    <property type="gene designation" value="Slc22a23"/>
</dbReference>
<dbReference type="VEuPathDB" id="HostDB:ENSMUSG00000038267"/>
<dbReference type="eggNOG" id="KOG0255">
    <property type="taxonomic scope" value="Eukaryota"/>
</dbReference>
<dbReference type="GeneTree" id="ENSGT00940000157354"/>
<dbReference type="InParanoid" id="Q3UHH2"/>
<dbReference type="OMA" id="QKNCISP"/>
<dbReference type="OrthoDB" id="6884957at2759"/>
<dbReference type="PhylomeDB" id="Q3UHH2"/>
<dbReference type="TreeFam" id="TF335753"/>
<dbReference type="BioGRID-ORCS" id="73102">
    <property type="hits" value="2 hits in 78 CRISPR screens"/>
</dbReference>
<dbReference type="ChiTaRS" id="Slc22a23">
    <property type="organism name" value="mouse"/>
</dbReference>
<dbReference type="PRO" id="PR:Q3UHH2"/>
<dbReference type="Proteomes" id="UP000000589">
    <property type="component" value="Chromosome 13"/>
</dbReference>
<dbReference type="RNAct" id="Q3UHH2">
    <property type="molecule type" value="protein"/>
</dbReference>
<dbReference type="Bgee" id="ENSMUSG00000038267">
    <property type="expression patterns" value="Expressed in pyloric antrum and 239 other cell types or tissues"/>
</dbReference>
<dbReference type="ExpressionAtlas" id="Q3UHH2">
    <property type="expression patterns" value="baseline and differential"/>
</dbReference>
<dbReference type="GO" id="GO:0016020">
    <property type="term" value="C:membrane"/>
    <property type="evidence" value="ECO:0007669"/>
    <property type="project" value="UniProtKB-SubCell"/>
</dbReference>
<dbReference type="GO" id="GO:0022857">
    <property type="term" value="F:transmembrane transporter activity"/>
    <property type="evidence" value="ECO:0007669"/>
    <property type="project" value="InterPro"/>
</dbReference>
<dbReference type="GO" id="GO:0006811">
    <property type="term" value="P:monoatomic ion transport"/>
    <property type="evidence" value="ECO:0007669"/>
    <property type="project" value="UniProtKB-KW"/>
</dbReference>
<dbReference type="CDD" id="cd17444">
    <property type="entry name" value="MFS_SLC22A23"/>
    <property type="match status" value="1"/>
</dbReference>
<dbReference type="Gene3D" id="1.20.1250.20">
    <property type="entry name" value="MFS general substrate transporter like domains"/>
    <property type="match status" value="1"/>
</dbReference>
<dbReference type="InterPro" id="IPR005828">
    <property type="entry name" value="MFS_sugar_transport-like"/>
</dbReference>
<dbReference type="InterPro" id="IPR036259">
    <property type="entry name" value="MFS_trans_sf"/>
</dbReference>
<dbReference type="InterPro" id="IPR005829">
    <property type="entry name" value="Sugar_transporter_CS"/>
</dbReference>
<dbReference type="PANTHER" id="PTHR24064">
    <property type="entry name" value="SOLUTE CARRIER FAMILY 22 MEMBER"/>
    <property type="match status" value="1"/>
</dbReference>
<dbReference type="Pfam" id="PF00083">
    <property type="entry name" value="Sugar_tr"/>
    <property type="match status" value="1"/>
</dbReference>
<dbReference type="SUPFAM" id="SSF103473">
    <property type="entry name" value="MFS general substrate transporter"/>
    <property type="match status" value="1"/>
</dbReference>
<dbReference type="PROSITE" id="PS00216">
    <property type="entry name" value="SUGAR_TRANSPORT_1"/>
    <property type="match status" value="1"/>
</dbReference>
<evidence type="ECO:0000255" key="1"/>
<evidence type="ECO:0000256" key="2">
    <source>
        <dbReference type="SAM" id="MobiDB-lite"/>
    </source>
</evidence>
<evidence type="ECO:0000303" key="3">
    <source>
    </source>
</evidence>
<evidence type="ECO:0000305" key="4"/>
<organism>
    <name type="scientific">Mus musculus</name>
    <name type="common">Mouse</name>
    <dbReference type="NCBI Taxonomy" id="10090"/>
    <lineage>
        <taxon>Eukaryota</taxon>
        <taxon>Metazoa</taxon>
        <taxon>Chordata</taxon>
        <taxon>Craniata</taxon>
        <taxon>Vertebrata</taxon>
        <taxon>Euteleostomi</taxon>
        <taxon>Mammalia</taxon>
        <taxon>Eutheria</taxon>
        <taxon>Euarchontoglires</taxon>
        <taxon>Glires</taxon>
        <taxon>Rodentia</taxon>
        <taxon>Myomorpha</taxon>
        <taxon>Muroidea</taxon>
        <taxon>Muridae</taxon>
        <taxon>Murinae</taxon>
        <taxon>Mus</taxon>
        <taxon>Mus</taxon>
    </lineage>
</organism>